<proteinExistence type="evidence at protein level"/>
<organism>
    <name type="scientific">Oryza sativa subsp. japonica</name>
    <name type="common">Rice</name>
    <dbReference type="NCBI Taxonomy" id="39947"/>
    <lineage>
        <taxon>Eukaryota</taxon>
        <taxon>Viridiplantae</taxon>
        <taxon>Streptophyta</taxon>
        <taxon>Embryophyta</taxon>
        <taxon>Tracheophyta</taxon>
        <taxon>Spermatophyta</taxon>
        <taxon>Magnoliopsida</taxon>
        <taxon>Liliopsida</taxon>
        <taxon>Poales</taxon>
        <taxon>Poaceae</taxon>
        <taxon>BOP clade</taxon>
        <taxon>Oryzoideae</taxon>
        <taxon>Oryzeae</taxon>
        <taxon>Oryzinae</taxon>
        <taxon>Oryza</taxon>
        <taxon>Oryza sativa</taxon>
    </lineage>
</organism>
<name>ETR2_ORYSJ</name>
<dbReference type="EC" id="2.7.13.3" evidence="8"/>
<dbReference type="EMBL" id="AF420319">
    <property type="protein sequence ID" value="AAL29304.2"/>
    <property type="molecule type" value="mRNA"/>
</dbReference>
<dbReference type="EMBL" id="AL663013">
    <property type="protein sequence ID" value="CAD39679.1"/>
    <property type="molecule type" value="Genomic_DNA"/>
</dbReference>
<dbReference type="EMBL" id="CR933497">
    <property type="protein sequence ID" value="CAI44599.1"/>
    <property type="molecule type" value="Genomic_DNA"/>
</dbReference>
<dbReference type="EMBL" id="AP008210">
    <property type="protein sequence ID" value="BAF14057.1"/>
    <property type="status" value="ALT_SEQ"/>
    <property type="molecule type" value="Genomic_DNA"/>
</dbReference>
<dbReference type="EMBL" id="AP014960">
    <property type="protein sequence ID" value="BAS87896.1"/>
    <property type="molecule type" value="Genomic_DNA"/>
</dbReference>
<dbReference type="EMBL" id="AK111748">
    <property type="protein sequence ID" value="BAG99395.1"/>
    <property type="molecule type" value="mRNA"/>
</dbReference>
<dbReference type="RefSeq" id="XP_015636406.1">
    <property type="nucleotide sequence ID" value="XM_015780920.1"/>
</dbReference>
<dbReference type="SMR" id="Q7XX84"/>
<dbReference type="FunCoup" id="Q7XX84">
    <property type="interactions" value="169"/>
</dbReference>
<dbReference type="STRING" id="39947.Q7XX84"/>
<dbReference type="PaxDb" id="39947-Q7XX84"/>
<dbReference type="EnsemblPlants" id="Os04t0169100-02">
    <property type="protein sequence ID" value="Os04t0169100-02"/>
    <property type="gene ID" value="Os04g0169100"/>
</dbReference>
<dbReference type="Gramene" id="Os04t0169100-02">
    <property type="protein sequence ID" value="Os04t0169100-02"/>
    <property type="gene ID" value="Os04g0169100"/>
</dbReference>
<dbReference type="KEGG" id="dosa:Os04g0169100"/>
<dbReference type="eggNOG" id="KOG0519">
    <property type="taxonomic scope" value="Eukaryota"/>
</dbReference>
<dbReference type="HOGENOM" id="CLU_000445_114_48_1"/>
<dbReference type="InParanoid" id="Q7XX84"/>
<dbReference type="OMA" id="FNCCDED"/>
<dbReference type="OrthoDB" id="60033at2759"/>
<dbReference type="PlantReactome" id="R-OSA-5225756">
    <property type="pathway name" value="Ethylene mediated signaling"/>
</dbReference>
<dbReference type="Proteomes" id="UP000000763">
    <property type="component" value="Chromosome 4"/>
</dbReference>
<dbReference type="Proteomes" id="UP000059680">
    <property type="component" value="Chromosome 4"/>
</dbReference>
<dbReference type="ExpressionAtlas" id="Q7XX84">
    <property type="expression patterns" value="baseline and differential"/>
</dbReference>
<dbReference type="GO" id="GO:0005783">
    <property type="term" value="C:endoplasmic reticulum"/>
    <property type="evidence" value="ECO:0000318"/>
    <property type="project" value="GO_Central"/>
</dbReference>
<dbReference type="GO" id="GO:0005789">
    <property type="term" value="C:endoplasmic reticulum membrane"/>
    <property type="evidence" value="ECO:0007669"/>
    <property type="project" value="UniProtKB-SubCell"/>
</dbReference>
<dbReference type="GO" id="GO:0005524">
    <property type="term" value="F:ATP binding"/>
    <property type="evidence" value="ECO:0007669"/>
    <property type="project" value="UniProtKB-KW"/>
</dbReference>
<dbReference type="GO" id="GO:0051740">
    <property type="term" value="F:ethylene binding"/>
    <property type="evidence" value="ECO:0000318"/>
    <property type="project" value="GO_Central"/>
</dbReference>
<dbReference type="GO" id="GO:0038199">
    <property type="term" value="F:ethylene receptor activity"/>
    <property type="evidence" value="ECO:0000318"/>
    <property type="project" value="GO_Central"/>
</dbReference>
<dbReference type="GO" id="GO:0046872">
    <property type="term" value="F:metal ion binding"/>
    <property type="evidence" value="ECO:0007669"/>
    <property type="project" value="UniProtKB-KW"/>
</dbReference>
<dbReference type="GO" id="GO:0004673">
    <property type="term" value="F:protein histidine kinase activity"/>
    <property type="evidence" value="ECO:0007669"/>
    <property type="project" value="UniProtKB-EC"/>
</dbReference>
<dbReference type="GO" id="GO:0004674">
    <property type="term" value="F:protein serine/threonine kinase activity"/>
    <property type="evidence" value="ECO:0000314"/>
    <property type="project" value="CACAO"/>
</dbReference>
<dbReference type="GO" id="GO:0006355">
    <property type="term" value="P:regulation of DNA-templated transcription"/>
    <property type="evidence" value="ECO:0000315"/>
    <property type="project" value="CACAO"/>
</dbReference>
<dbReference type="GO" id="GO:2000904">
    <property type="term" value="P:regulation of starch metabolic process"/>
    <property type="evidence" value="ECO:0000315"/>
    <property type="project" value="CACAO"/>
</dbReference>
<dbReference type="GO" id="GO:0009723">
    <property type="term" value="P:response to ethylene"/>
    <property type="evidence" value="ECO:0000315"/>
    <property type="project" value="CACAO"/>
</dbReference>
<dbReference type="CDD" id="cd16938">
    <property type="entry name" value="HATPase_ETR2_ERS2-EIN4-like"/>
    <property type="match status" value="1"/>
</dbReference>
<dbReference type="CDD" id="cd19933">
    <property type="entry name" value="REC_ETR-like"/>
    <property type="match status" value="1"/>
</dbReference>
<dbReference type="FunFam" id="3.30.565.10:FF:000094">
    <property type="entry name" value="Ethylene receptor"/>
    <property type="match status" value="1"/>
</dbReference>
<dbReference type="FunFam" id="3.40.50.2300:FF:000240">
    <property type="entry name" value="Ethylene receptor"/>
    <property type="match status" value="1"/>
</dbReference>
<dbReference type="FunFam" id="1.10.287.130:FF:000087">
    <property type="entry name" value="Ethylene receptor 4"/>
    <property type="match status" value="1"/>
</dbReference>
<dbReference type="Gene3D" id="1.10.287.130">
    <property type="match status" value="1"/>
</dbReference>
<dbReference type="Gene3D" id="3.30.450.40">
    <property type="match status" value="1"/>
</dbReference>
<dbReference type="Gene3D" id="3.40.50.2300">
    <property type="match status" value="1"/>
</dbReference>
<dbReference type="Gene3D" id="3.30.565.10">
    <property type="entry name" value="Histidine kinase-like ATPase, C-terminal domain"/>
    <property type="match status" value="1"/>
</dbReference>
<dbReference type="InterPro" id="IPR011006">
    <property type="entry name" value="CheY-like_superfamily"/>
</dbReference>
<dbReference type="InterPro" id="IPR014525">
    <property type="entry name" value="ETR"/>
</dbReference>
<dbReference type="InterPro" id="IPR003018">
    <property type="entry name" value="GAF"/>
</dbReference>
<dbReference type="InterPro" id="IPR029016">
    <property type="entry name" value="GAF-like_dom_sf"/>
</dbReference>
<dbReference type="InterPro" id="IPR036890">
    <property type="entry name" value="HATPase_C_sf"/>
</dbReference>
<dbReference type="InterPro" id="IPR005467">
    <property type="entry name" value="His_kinase_dom"/>
</dbReference>
<dbReference type="InterPro" id="IPR001789">
    <property type="entry name" value="Sig_transdc_resp-reg_receiver"/>
</dbReference>
<dbReference type="PANTHER" id="PTHR24423:SF633">
    <property type="entry name" value="ETHYLENE RECEPTOR 2"/>
    <property type="match status" value="1"/>
</dbReference>
<dbReference type="PANTHER" id="PTHR24423">
    <property type="entry name" value="TWO-COMPONENT SENSOR HISTIDINE KINASE"/>
    <property type="match status" value="1"/>
</dbReference>
<dbReference type="Pfam" id="PF25487">
    <property type="entry name" value="ETR1_N"/>
    <property type="match status" value="1"/>
</dbReference>
<dbReference type="Pfam" id="PF01590">
    <property type="entry name" value="GAF"/>
    <property type="match status" value="1"/>
</dbReference>
<dbReference type="Pfam" id="PF00072">
    <property type="entry name" value="Response_reg"/>
    <property type="match status" value="1"/>
</dbReference>
<dbReference type="PIRSF" id="PIRSF026389">
    <property type="entry name" value="Ethyln_sen_HK"/>
    <property type="match status" value="1"/>
</dbReference>
<dbReference type="SMART" id="SM00065">
    <property type="entry name" value="GAF"/>
    <property type="match status" value="1"/>
</dbReference>
<dbReference type="SMART" id="SM00448">
    <property type="entry name" value="REC"/>
    <property type="match status" value="1"/>
</dbReference>
<dbReference type="SUPFAM" id="SSF55874">
    <property type="entry name" value="ATPase domain of HSP90 chaperone/DNA topoisomerase II/histidine kinase"/>
    <property type="match status" value="1"/>
</dbReference>
<dbReference type="SUPFAM" id="SSF52172">
    <property type="entry name" value="CheY-like"/>
    <property type="match status" value="1"/>
</dbReference>
<dbReference type="SUPFAM" id="SSF55781">
    <property type="entry name" value="GAF domain-like"/>
    <property type="match status" value="1"/>
</dbReference>
<dbReference type="PROSITE" id="PS50109">
    <property type="entry name" value="HIS_KIN"/>
    <property type="match status" value="1"/>
</dbReference>
<dbReference type="PROSITE" id="PS50110">
    <property type="entry name" value="RESPONSE_REGULATORY"/>
    <property type="match status" value="1"/>
</dbReference>
<protein>
    <recommendedName>
        <fullName evidence="8">Ethylene receptor 2</fullName>
        <shortName evidence="8">OsETR2</shortName>
        <ecNumber evidence="8">2.7.13.3</ecNumber>
    </recommendedName>
    <alternativeName>
        <fullName evidence="9">OsPK1</fullName>
    </alternativeName>
</protein>
<evidence type="ECO:0000250" key="1">
    <source>
        <dbReference type="UniProtKB" id="P49333"/>
    </source>
</evidence>
<evidence type="ECO:0000255" key="2"/>
<evidence type="ECO:0000255" key="3">
    <source>
        <dbReference type="PROSITE-ProRule" id="PRU00107"/>
    </source>
</evidence>
<evidence type="ECO:0000255" key="4">
    <source>
        <dbReference type="PROSITE-ProRule" id="PRU00169"/>
    </source>
</evidence>
<evidence type="ECO:0000269" key="5">
    <source>
    </source>
</evidence>
<evidence type="ECO:0000269" key="6">
    <source>
    </source>
</evidence>
<evidence type="ECO:0000303" key="7">
    <source>
    </source>
</evidence>
<evidence type="ECO:0000305" key="8"/>
<evidence type="ECO:0000312" key="9">
    <source>
        <dbReference type="EMBL" id="AAL29304.2"/>
    </source>
</evidence>
<evidence type="ECO:0000312" key="10">
    <source>
        <dbReference type="EMBL" id="BAF14057.1"/>
    </source>
</evidence>
<evidence type="ECO:0000312" key="11">
    <source>
        <dbReference type="EMBL" id="CAD39679.1"/>
    </source>
</evidence>
<evidence type="ECO:0000312" key="12">
    <source>
        <dbReference type="EMBL" id="CAI44599.1"/>
    </source>
</evidence>
<reference key="1">
    <citation type="journal article" date="2009" name="Plant Cell">
        <title>The ethylene receptor ETR2 delays floral transition and affects starch accumulation in rice.</title>
        <authorList>
            <person name="Wuriyanghan H."/>
            <person name="Zhang B."/>
            <person name="Cao W.H."/>
            <person name="Ma B."/>
            <person name="Lei G."/>
            <person name="Liu Y.F."/>
            <person name="Wei W."/>
            <person name="Wu H.J."/>
            <person name="Chen L.J."/>
            <person name="Chen H.W."/>
            <person name="Cao Y.R."/>
            <person name="He S.J."/>
            <person name="Zhang W.K."/>
            <person name="Wang X.J."/>
            <person name="Chen S.Y."/>
            <person name="Zhang J.S."/>
        </authorList>
    </citation>
    <scope>NUCLEOTIDE SEQUENCE [MRNA]</scope>
    <scope>FUNCTION</scope>
    <scope>PHOSPHORYLATION</scope>
    <scope>DISRUPTION PHENOTYPE</scope>
    <scope>MUTAGENESIS OF GLY-487; GLU-489; ARG-491; PHE-493 AND GLY-501</scope>
    <source>
        <strain>cv. Lansheng</strain>
    </source>
</reference>
<reference key="2">
    <citation type="journal article" date="2002" name="Nature">
        <title>Sequence and analysis of rice chromosome 4.</title>
        <authorList>
            <person name="Feng Q."/>
            <person name="Zhang Y."/>
            <person name="Hao P."/>
            <person name="Wang S."/>
            <person name="Fu G."/>
            <person name="Huang Y."/>
            <person name="Li Y."/>
            <person name="Zhu J."/>
            <person name="Liu Y."/>
            <person name="Hu X."/>
            <person name="Jia P."/>
            <person name="Zhang Y."/>
            <person name="Zhao Q."/>
            <person name="Ying K."/>
            <person name="Yu S."/>
            <person name="Tang Y."/>
            <person name="Weng Q."/>
            <person name="Zhang L."/>
            <person name="Lu Y."/>
            <person name="Mu J."/>
            <person name="Lu Y."/>
            <person name="Zhang L.S."/>
            <person name="Yu Z."/>
            <person name="Fan D."/>
            <person name="Liu X."/>
            <person name="Lu T."/>
            <person name="Li C."/>
            <person name="Wu Y."/>
            <person name="Sun T."/>
            <person name="Lei H."/>
            <person name="Li T."/>
            <person name="Hu H."/>
            <person name="Guan J."/>
            <person name="Wu M."/>
            <person name="Zhang R."/>
            <person name="Zhou B."/>
            <person name="Chen Z."/>
            <person name="Chen L."/>
            <person name="Jin Z."/>
            <person name="Wang R."/>
            <person name="Yin H."/>
            <person name="Cai Z."/>
            <person name="Ren S."/>
            <person name="Lv G."/>
            <person name="Gu W."/>
            <person name="Zhu G."/>
            <person name="Tu Y."/>
            <person name="Jia J."/>
            <person name="Zhang Y."/>
            <person name="Chen J."/>
            <person name="Kang H."/>
            <person name="Chen X."/>
            <person name="Shao C."/>
            <person name="Sun Y."/>
            <person name="Hu Q."/>
            <person name="Zhang X."/>
            <person name="Zhang W."/>
            <person name="Wang L."/>
            <person name="Ding C."/>
            <person name="Sheng H."/>
            <person name="Gu J."/>
            <person name="Chen S."/>
            <person name="Ni L."/>
            <person name="Zhu F."/>
            <person name="Chen W."/>
            <person name="Lan L."/>
            <person name="Lai Y."/>
            <person name="Cheng Z."/>
            <person name="Gu M."/>
            <person name="Jiang J."/>
            <person name="Li J."/>
            <person name="Hong G."/>
            <person name="Xue Y."/>
            <person name="Han B."/>
        </authorList>
    </citation>
    <scope>NUCLEOTIDE SEQUENCE [LARGE SCALE GENOMIC DNA]</scope>
    <source>
        <strain>cv. Nipponbare</strain>
    </source>
</reference>
<reference key="3">
    <citation type="journal article" date="2005" name="Nature">
        <title>The map-based sequence of the rice genome.</title>
        <authorList>
            <consortium name="International rice genome sequencing project (IRGSP)"/>
        </authorList>
    </citation>
    <scope>NUCLEOTIDE SEQUENCE [LARGE SCALE GENOMIC DNA]</scope>
    <source>
        <strain>cv. Nipponbare</strain>
    </source>
</reference>
<reference key="4">
    <citation type="journal article" date="2008" name="Nucleic Acids Res.">
        <title>The rice annotation project database (RAP-DB): 2008 update.</title>
        <authorList>
            <consortium name="The rice annotation project (RAP)"/>
        </authorList>
    </citation>
    <scope>GENOME REANNOTATION</scope>
    <source>
        <strain>cv. Nipponbare</strain>
    </source>
</reference>
<reference key="5">
    <citation type="journal article" date="2013" name="Rice">
        <title>Improvement of the Oryza sativa Nipponbare reference genome using next generation sequence and optical map data.</title>
        <authorList>
            <person name="Kawahara Y."/>
            <person name="de la Bastide M."/>
            <person name="Hamilton J.P."/>
            <person name="Kanamori H."/>
            <person name="McCombie W.R."/>
            <person name="Ouyang S."/>
            <person name="Schwartz D.C."/>
            <person name="Tanaka T."/>
            <person name="Wu J."/>
            <person name="Zhou S."/>
            <person name="Childs K.L."/>
            <person name="Davidson R.M."/>
            <person name="Lin H."/>
            <person name="Quesada-Ocampo L."/>
            <person name="Vaillancourt B."/>
            <person name="Sakai H."/>
            <person name="Lee S.S."/>
            <person name="Kim J."/>
            <person name="Numa H."/>
            <person name="Itoh T."/>
            <person name="Buell C.R."/>
            <person name="Matsumoto T."/>
        </authorList>
    </citation>
    <scope>GENOME REANNOTATION</scope>
    <source>
        <strain>cv. Nipponbare</strain>
    </source>
</reference>
<reference key="6">
    <citation type="journal article" date="2003" name="Science">
        <title>Collection, mapping, and annotation of over 28,000 cDNA clones from japonica rice.</title>
        <authorList>
            <consortium name="The rice full-length cDNA consortium"/>
        </authorList>
    </citation>
    <scope>NUCLEOTIDE SEQUENCE [LARGE SCALE MRNA]</scope>
    <source>
        <strain>cv. Nipponbare</strain>
    </source>
</reference>
<reference key="7">
    <citation type="journal article" date="2005" name="Gene">
        <title>Identification and characterization of a novel water-deficit-suppressed gene OsARD encoding an aci-reductone-dioxygenase-like protein in rice.</title>
        <authorList>
            <person name="Lin T."/>
            <person name="He X.W."/>
            <person name="Yang L."/>
            <person name="Shou H.X."/>
            <person name="Wu P."/>
        </authorList>
    </citation>
    <scope>INDUCTION BY WATER DEFICIENCY</scope>
</reference>
<feature type="chain" id="PRO_0000433865" description="Ethylene receptor 2">
    <location>
        <begin position="1"/>
        <end position="763"/>
    </location>
</feature>
<feature type="transmembrane region" description="Helical" evidence="2">
    <location>
        <begin position="58"/>
        <end position="78"/>
    </location>
</feature>
<feature type="transmembrane region" description="Helical" evidence="2">
    <location>
        <begin position="86"/>
        <end position="106"/>
    </location>
</feature>
<feature type="transmembrane region" description="Helical" evidence="2">
    <location>
        <begin position="115"/>
        <end position="135"/>
    </location>
</feature>
<feature type="domain" description="GAF" evidence="8">
    <location>
        <begin position="190"/>
        <end position="339"/>
    </location>
</feature>
<feature type="domain" description="Histidine kinase" evidence="3">
    <location>
        <begin position="382"/>
        <end position="615"/>
    </location>
</feature>
<feature type="domain" description="Response regulatory" evidence="4">
    <location>
        <begin position="641"/>
        <end position="760"/>
    </location>
</feature>
<feature type="binding site" evidence="1">
    <location>
        <position position="97"/>
    </location>
    <ligand>
        <name>Cu cation</name>
        <dbReference type="ChEBI" id="CHEBI:23378"/>
    </ligand>
</feature>
<feature type="binding site" evidence="1">
    <location>
        <position position="101"/>
    </location>
    <ligand>
        <name>Cu cation</name>
        <dbReference type="ChEBI" id="CHEBI:23378"/>
    </ligand>
</feature>
<feature type="modified residue" description="4-aspartylphosphate" evidence="4">
    <location>
        <position position="692"/>
    </location>
</feature>
<feature type="disulfide bond" description="Interchain" evidence="1">
    <location>
        <position position="31"/>
    </location>
</feature>
<feature type="disulfide bond" description="Interchain" evidence="1">
    <location>
        <position position="34"/>
    </location>
</feature>
<feature type="mutagenesis site" description="Loss of kinase activity; when associated with Q-489, Q-491, A-493 and A-501." evidence="6">
    <original>G</original>
    <variation>A</variation>
    <location>
        <position position="487"/>
    </location>
</feature>
<feature type="mutagenesis site" description="Loss of kinase activity; when associated with A-487, Q-491, A-493 and A-501." evidence="6">
    <original>E</original>
    <variation>Q</variation>
    <location>
        <position position="489"/>
    </location>
</feature>
<feature type="mutagenesis site" description="Loss of kinase activity; when associated with A-487, Q-489, A-493 and A-501." evidence="6">
    <original>R</original>
    <variation>Q</variation>
    <location>
        <position position="491"/>
    </location>
</feature>
<feature type="mutagenesis site" description="Loss of kinase activity; when associated with A-487, Q-489, Q-491 and A-501." evidence="6">
    <original>F</original>
    <variation>A</variation>
    <location>
        <position position="493"/>
    </location>
</feature>
<feature type="mutagenesis site" description="Loss of kinase activity; when associated with A-487, Q-489, Q-491 and A-493." evidence="6">
    <original>G</original>
    <variation>A</variation>
    <location>
        <position position="501"/>
    </location>
</feature>
<feature type="sequence conflict" description="In Ref. 1; AAL29304." evidence="8" ref="1">
    <original>V</original>
    <variation>A</variation>
    <location>
        <position position="516"/>
    </location>
</feature>
<accession>Q7XX84</accession>
<accession>A0A0P0W6W4</accession>
<accession>Q0JF30</accession>
<accession>Q5H9Y0</accession>
<accession>Q944U0</accession>
<sequence length="763" mass="84832">MPPIPSLWIRVFFSWLLLSLPAAAAADFSHCGGCDDGDGGGGIWSTDNILQCQRVSDFLIAMAYFSIPLELLYFATCSDLFPLKWIVLQFGAFIVLCGLTHLITMFTYEPHSFHVVLALTVAKFLTALVSFATAITLLTLIPQLLRVKVRENFLRIKARELDREVGMMKRQEEASWHVRMLTHEIRKSLDRHTILYTTMVELSKTLELQNCAVWMPSESGSEMILTHQLRQMETEDSNSLSIAMDNPDVLEIKATKDAKVLAADSALGIASRGKLEAGPVAAIRMPMLKASNFKGGTPEVMETSYAILVLVLPEDGSLGWGEEELEIVEVVADQVAVALSHAAVLEESQLMREKLAAQHRDLLRAKHETTMATEARNSFQTAMYDGMRRPMHSILGLVSMMQQENMNPEQRLVMDAIVKTSSVASTLMNDVMQTSTVNREYLSLVRRAFNLHSLVKEAISVVRCLTGCKGIDFEFEVDNSLPERVVGDEKRVFHIVLHMVGTLIQRCNAGCLSLYVNTYNEKEERHNQDWMLRRANFSGSYVCVKFEIRIRESRGNLLSSSSSRRLQGPNSTSSEMGLSFNMCKKIVQMMNGNIWSVSDSKGLGETIMLALQFQLQHVTPVSGASSDLFRSAPIPNFNGLQVILVDSDDTNRAVTHKLLEKLGCLVLSVTSGIQCINSFASAESSFQLVVLDLTMRTMDGFDVALAIRKFRGNCWPPLIVALAASTDDTVRDRCQQAGINGLIQKPVTLAALGDELYRVLQNN</sequence>
<keyword id="KW-0067">ATP-binding</keyword>
<keyword id="KW-0186">Copper</keyword>
<keyword id="KW-1015">Disulfide bond</keyword>
<keyword id="KW-0256">Endoplasmic reticulum</keyword>
<keyword id="KW-0936">Ethylene signaling pathway</keyword>
<keyword id="KW-0418">Kinase</keyword>
<keyword id="KW-0472">Membrane</keyword>
<keyword id="KW-0479">Metal-binding</keyword>
<keyword id="KW-0547">Nucleotide-binding</keyword>
<keyword id="KW-0597">Phosphoprotein</keyword>
<keyword id="KW-0675">Receptor</keyword>
<keyword id="KW-1185">Reference proteome</keyword>
<keyword id="KW-0808">Transferase</keyword>
<keyword id="KW-0812">Transmembrane</keyword>
<keyword id="KW-1133">Transmembrane helix</keyword>
<keyword id="KW-0902">Two-component regulatory system</keyword>
<gene>
    <name evidence="7" type="primary">ETR2</name>
    <name evidence="10" type="ordered locus">Os04g0169100</name>
    <name evidence="8" type="ordered locus">LOC_Os04g08740</name>
    <name evidence="12" type="ORF">P0650D04.3</name>
    <name evidence="11" type="ORF">SJNBb0089K06.20</name>
</gene>
<comment type="function">
    <text evidence="6">Ethylene receptor related to bacterial two-component regulators. Acts as a negative regulator of ethylene signaling. May delay the transition from the vegetative stage to the floral stage by up-regulating GI (GIGANTEA) and RCN1 and cause starch accumulation in stems by down-regulating the alpha-amylase AMY3D.</text>
</comment>
<comment type="catalytic activity">
    <reaction evidence="8">
        <text>ATP + protein L-histidine = ADP + protein N-phospho-L-histidine.</text>
        <dbReference type="EC" id="2.7.13.3"/>
    </reaction>
</comment>
<comment type="cofactor">
    <cofactor evidence="1">
        <name>Cu cation</name>
        <dbReference type="ChEBI" id="CHEBI:23378"/>
    </cofactor>
    <text evidence="1">Binds 1 copper ion per dimer.</text>
</comment>
<comment type="subcellular location">
    <subcellularLocation>
        <location evidence="1">Endoplasmic reticulum membrane</location>
        <topology evidence="2">Multi-pass membrane protein</topology>
    </subcellularLocation>
</comment>
<comment type="induction">
    <text evidence="5">Induced by water deficiency.</text>
</comment>
<comment type="PTM">
    <text evidence="6">Autophosphorylated on serine, threonine and tyrosine residues.</text>
</comment>
<comment type="disruption phenotype">
    <text evidence="6">Enhanced ethylene sensitivity and early flowering.</text>
</comment>
<comment type="miscellaneous">
    <text evidence="6">Plants over-expressing ETR2 display reduced ethylene sensitivity, delayed floral transition and reduced seed set.</text>
</comment>
<comment type="similarity">
    <text evidence="8">Belongs to the ethylene receptor family.</text>
</comment>
<comment type="sequence caution" evidence="8">
    <conflict type="erroneous gene model prediction">
        <sequence resource="EMBL-CDS" id="BAF14057"/>
    </conflict>
</comment>